<gene>
    <name evidence="1" type="primary">fabH</name>
    <name type="ordered locus">HS_0165</name>
</gene>
<organism>
    <name type="scientific">Histophilus somni (strain 129Pt)</name>
    <name type="common">Haemophilus somnus</name>
    <dbReference type="NCBI Taxonomy" id="205914"/>
    <lineage>
        <taxon>Bacteria</taxon>
        <taxon>Pseudomonadati</taxon>
        <taxon>Pseudomonadota</taxon>
        <taxon>Gammaproteobacteria</taxon>
        <taxon>Pasteurellales</taxon>
        <taxon>Pasteurellaceae</taxon>
        <taxon>Histophilus</taxon>
    </lineage>
</organism>
<accession>Q0I0V6</accession>
<protein>
    <recommendedName>
        <fullName evidence="1">Beta-ketoacyl-[acyl-carrier-protein] synthase III</fullName>
        <shortName evidence="1">Beta-ketoacyl-ACP synthase III</shortName>
        <shortName evidence="1">KAS III</shortName>
        <ecNumber evidence="1">2.3.1.180</ecNumber>
    </recommendedName>
    <alternativeName>
        <fullName evidence="1">3-oxoacyl-[acyl-carrier-protein] synthase 3</fullName>
    </alternativeName>
    <alternativeName>
        <fullName evidence="1">3-oxoacyl-[acyl-carrier-protein] synthase III</fullName>
    </alternativeName>
</protein>
<proteinExistence type="inferred from homology"/>
<keyword id="KW-0012">Acyltransferase</keyword>
<keyword id="KW-0963">Cytoplasm</keyword>
<keyword id="KW-0275">Fatty acid biosynthesis</keyword>
<keyword id="KW-0276">Fatty acid metabolism</keyword>
<keyword id="KW-0444">Lipid biosynthesis</keyword>
<keyword id="KW-0443">Lipid metabolism</keyword>
<keyword id="KW-0511">Multifunctional enzyme</keyword>
<keyword id="KW-0808">Transferase</keyword>
<evidence type="ECO:0000255" key="1">
    <source>
        <dbReference type="HAMAP-Rule" id="MF_01815"/>
    </source>
</evidence>
<sequence length="316" mass="34212">MYSRILATGSYIPANIRTNADLEKMVETSDEWITTRSGIKERRIAGENETVATMGFKAAKNALQLANICPNDIDLVLVATTSHSYAYPSAACQIQGMLDIDDAISFDLAAACTGFIYALSVADQFIKTGKVKKALVIGADINSRKLDETDRSTVILFGDGAGAVILESSDIEGIISTHLHASLDKSNALILPQTQHGEAQSGYIQMQGNATFKLAVRELSNVVEETLRDNHLDKADLDWLVPHQANLRIITATAEKLNMSLDQVVITLDKYGNTSAATVPVALDEAVRDGRIKRGQLLLLEAFGGGWTWGSALVRF</sequence>
<feature type="chain" id="PRO_1000056365" description="Beta-ketoacyl-[acyl-carrier-protein] synthase III">
    <location>
        <begin position="1"/>
        <end position="316"/>
    </location>
</feature>
<feature type="region of interest" description="ACP-binding" evidence="1">
    <location>
        <begin position="244"/>
        <end position="248"/>
    </location>
</feature>
<feature type="active site" evidence="1">
    <location>
        <position position="112"/>
    </location>
</feature>
<feature type="active site" evidence="1">
    <location>
        <position position="243"/>
    </location>
</feature>
<feature type="active site" evidence="1">
    <location>
        <position position="273"/>
    </location>
</feature>
<reference key="1">
    <citation type="journal article" date="2007" name="J. Bacteriol.">
        <title>Complete genome sequence of Haemophilus somnus (Histophilus somni) strain 129Pt and comparison to Haemophilus ducreyi 35000HP and Haemophilus influenzae Rd.</title>
        <authorList>
            <person name="Challacombe J.F."/>
            <person name="Duncan A.J."/>
            <person name="Brettin T.S."/>
            <person name="Bruce D."/>
            <person name="Chertkov O."/>
            <person name="Detter J.C."/>
            <person name="Han C.S."/>
            <person name="Misra M."/>
            <person name="Richardson P."/>
            <person name="Tapia R."/>
            <person name="Thayer N."/>
            <person name="Xie G."/>
            <person name="Inzana T.J."/>
        </authorList>
    </citation>
    <scope>NUCLEOTIDE SEQUENCE [LARGE SCALE GENOMIC DNA]</scope>
    <source>
        <strain>129Pt</strain>
    </source>
</reference>
<dbReference type="EC" id="2.3.1.180" evidence="1"/>
<dbReference type="EMBL" id="CP000436">
    <property type="protein sequence ID" value="ABI24443.1"/>
    <property type="molecule type" value="Genomic_DNA"/>
</dbReference>
<dbReference type="SMR" id="Q0I0V6"/>
<dbReference type="KEGG" id="hso:HS_0165"/>
<dbReference type="eggNOG" id="COG0332">
    <property type="taxonomic scope" value="Bacteria"/>
</dbReference>
<dbReference type="HOGENOM" id="CLU_039592_3_1_6"/>
<dbReference type="UniPathway" id="UPA00094"/>
<dbReference type="GO" id="GO:0005737">
    <property type="term" value="C:cytoplasm"/>
    <property type="evidence" value="ECO:0007669"/>
    <property type="project" value="UniProtKB-SubCell"/>
</dbReference>
<dbReference type="GO" id="GO:0004315">
    <property type="term" value="F:3-oxoacyl-[acyl-carrier-protein] synthase activity"/>
    <property type="evidence" value="ECO:0007669"/>
    <property type="project" value="InterPro"/>
</dbReference>
<dbReference type="GO" id="GO:0033818">
    <property type="term" value="F:beta-ketoacyl-acyl-carrier-protein synthase III activity"/>
    <property type="evidence" value="ECO:0007669"/>
    <property type="project" value="UniProtKB-UniRule"/>
</dbReference>
<dbReference type="GO" id="GO:0006633">
    <property type="term" value="P:fatty acid biosynthetic process"/>
    <property type="evidence" value="ECO:0007669"/>
    <property type="project" value="UniProtKB-UniRule"/>
</dbReference>
<dbReference type="GO" id="GO:0044550">
    <property type="term" value="P:secondary metabolite biosynthetic process"/>
    <property type="evidence" value="ECO:0007669"/>
    <property type="project" value="TreeGrafter"/>
</dbReference>
<dbReference type="CDD" id="cd00830">
    <property type="entry name" value="KAS_III"/>
    <property type="match status" value="1"/>
</dbReference>
<dbReference type="FunFam" id="3.40.47.10:FF:000004">
    <property type="entry name" value="3-oxoacyl-[acyl-carrier-protein] synthase 3"/>
    <property type="match status" value="1"/>
</dbReference>
<dbReference type="Gene3D" id="3.40.47.10">
    <property type="match status" value="2"/>
</dbReference>
<dbReference type="HAMAP" id="MF_01815">
    <property type="entry name" value="FabH"/>
    <property type="match status" value="1"/>
</dbReference>
<dbReference type="InterPro" id="IPR013747">
    <property type="entry name" value="ACP_syn_III_C"/>
</dbReference>
<dbReference type="InterPro" id="IPR013751">
    <property type="entry name" value="ACP_syn_III_N"/>
</dbReference>
<dbReference type="InterPro" id="IPR004655">
    <property type="entry name" value="FabH"/>
</dbReference>
<dbReference type="InterPro" id="IPR016039">
    <property type="entry name" value="Thiolase-like"/>
</dbReference>
<dbReference type="NCBIfam" id="TIGR00747">
    <property type="entry name" value="fabH"/>
    <property type="match status" value="1"/>
</dbReference>
<dbReference type="NCBIfam" id="NF006829">
    <property type="entry name" value="PRK09352.1"/>
    <property type="match status" value="1"/>
</dbReference>
<dbReference type="PANTHER" id="PTHR34069">
    <property type="entry name" value="3-OXOACYL-[ACYL-CARRIER-PROTEIN] SYNTHASE 3"/>
    <property type="match status" value="1"/>
</dbReference>
<dbReference type="PANTHER" id="PTHR34069:SF2">
    <property type="entry name" value="BETA-KETOACYL-[ACYL-CARRIER-PROTEIN] SYNTHASE III"/>
    <property type="match status" value="1"/>
</dbReference>
<dbReference type="Pfam" id="PF08545">
    <property type="entry name" value="ACP_syn_III"/>
    <property type="match status" value="1"/>
</dbReference>
<dbReference type="Pfam" id="PF08541">
    <property type="entry name" value="ACP_syn_III_C"/>
    <property type="match status" value="1"/>
</dbReference>
<dbReference type="SUPFAM" id="SSF53901">
    <property type="entry name" value="Thiolase-like"/>
    <property type="match status" value="1"/>
</dbReference>
<name>FABH_HISS1</name>
<comment type="function">
    <text evidence="1">Catalyzes the condensation reaction of fatty acid synthesis by the addition to an acyl acceptor of two carbons from malonyl-ACP. Catalyzes the first condensation reaction which initiates fatty acid synthesis and may therefore play a role in governing the total rate of fatty acid production. Possesses both acetoacetyl-ACP synthase and acetyl transacylase activities. Its substrate specificity determines the biosynthesis of branched-chain and/or straight-chain of fatty acids.</text>
</comment>
<comment type="catalytic activity">
    <reaction evidence="1">
        <text>malonyl-[ACP] + acetyl-CoA + H(+) = 3-oxobutanoyl-[ACP] + CO2 + CoA</text>
        <dbReference type="Rhea" id="RHEA:12080"/>
        <dbReference type="Rhea" id="RHEA-COMP:9623"/>
        <dbReference type="Rhea" id="RHEA-COMP:9625"/>
        <dbReference type="ChEBI" id="CHEBI:15378"/>
        <dbReference type="ChEBI" id="CHEBI:16526"/>
        <dbReference type="ChEBI" id="CHEBI:57287"/>
        <dbReference type="ChEBI" id="CHEBI:57288"/>
        <dbReference type="ChEBI" id="CHEBI:78449"/>
        <dbReference type="ChEBI" id="CHEBI:78450"/>
        <dbReference type="EC" id="2.3.1.180"/>
    </reaction>
</comment>
<comment type="pathway">
    <text evidence="1">Lipid metabolism; fatty acid biosynthesis.</text>
</comment>
<comment type="subunit">
    <text evidence="1">Homodimer.</text>
</comment>
<comment type="subcellular location">
    <subcellularLocation>
        <location evidence="1">Cytoplasm</location>
    </subcellularLocation>
</comment>
<comment type="domain">
    <text evidence="1">The last Arg residue of the ACP-binding site is essential for the weak association between ACP/AcpP and FabH.</text>
</comment>
<comment type="similarity">
    <text evidence="1">Belongs to the thiolase-like superfamily. FabH family.</text>
</comment>